<sequence length="331" mass="36339">MKKPVVIGLVIAAIVAVIAGGTWWYQSRQDDGLTLYGNVDIRTVNISFRVGGRLASLNVDEGDTIKAGQVLGELDHAPYENALMQAKAGVSVAQAQYDLMLAGYRDEEIAQAAAAVRQAQAAYDYAQNFYNRQQGLWKSRTISANDLENARSSRDQAQATLKSAQDKLSQYRTGNREQDIAQAKASLEQAKAQLAQAQLDLQDTTLIAPANGTLLTRAVEPGSMLNAGSTVLTLSLTRPVWVRAYVDERNLSQTQPGRDILLYTDGRPDKPYHGKIGFVSPTAEFTPKTVETPDLRTDLVYRLRIIVTDADDALRQGMPVTVKFNDEARHE</sequence>
<protein>
    <recommendedName>
        <fullName>UPF0194 membrane protein YbhG</fullName>
    </recommendedName>
</protein>
<organism>
    <name type="scientific">Salmonella typhi</name>
    <dbReference type="NCBI Taxonomy" id="90370"/>
    <lineage>
        <taxon>Bacteria</taxon>
        <taxon>Pseudomonadati</taxon>
        <taxon>Pseudomonadota</taxon>
        <taxon>Gammaproteobacteria</taxon>
        <taxon>Enterobacterales</taxon>
        <taxon>Enterobacteriaceae</taxon>
        <taxon>Salmonella</taxon>
    </lineage>
</organism>
<feature type="signal peptide" evidence="1">
    <location>
        <begin position="1"/>
        <end position="19"/>
    </location>
</feature>
<feature type="chain" id="PRO_0000088750" description="UPF0194 membrane protein YbhG">
    <location>
        <begin position="20"/>
        <end position="331"/>
    </location>
</feature>
<feature type="coiled-coil region" evidence="1">
    <location>
        <begin position="140"/>
        <end position="209"/>
    </location>
</feature>
<comment type="subcellular location">
    <subcellularLocation>
        <location evidence="2">Periplasm</location>
    </subcellularLocation>
</comment>
<comment type="similarity">
    <text evidence="2">Belongs to the UPF0194 family.</text>
</comment>
<reference key="1">
    <citation type="journal article" date="2001" name="Nature">
        <title>Complete genome sequence of a multiple drug resistant Salmonella enterica serovar Typhi CT18.</title>
        <authorList>
            <person name="Parkhill J."/>
            <person name="Dougan G."/>
            <person name="James K.D."/>
            <person name="Thomson N.R."/>
            <person name="Pickard D."/>
            <person name="Wain J."/>
            <person name="Churcher C.M."/>
            <person name="Mungall K.L."/>
            <person name="Bentley S.D."/>
            <person name="Holden M.T.G."/>
            <person name="Sebaihia M."/>
            <person name="Baker S."/>
            <person name="Basham D."/>
            <person name="Brooks K."/>
            <person name="Chillingworth T."/>
            <person name="Connerton P."/>
            <person name="Cronin A."/>
            <person name="Davis P."/>
            <person name="Davies R.M."/>
            <person name="Dowd L."/>
            <person name="White N."/>
            <person name="Farrar J."/>
            <person name="Feltwell T."/>
            <person name="Hamlin N."/>
            <person name="Haque A."/>
            <person name="Hien T.T."/>
            <person name="Holroyd S."/>
            <person name="Jagels K."/>
            <person name="Krogh A."/>
            <person name="Larsen T.S."/>
            <person name="Leather S."/>
            <person name="Moule S."/>
            <person name="O'Gaora P."/>
            <person name="Parry C."/>
            <person name="Quail M.A."/>
            <person name="Rutherford K.M."/>
            <person name="Simmonds M."/>
            <person name="Skelton J."/>
            <person name="Stevens K."/>
            <person name="Whitehead S."/>
            <person name="Barrell B.G."/>
        </authorList>
    </citation>
    <scope>NUCLEOTIDE SEQUENCE [LARGE SCALE GENOMIC DNA]</scope>
    <source>
        <strain>CT18</strain>
    </source>
</reference>
<reference key="2">
    <citation type="journal article" date="2003" name="J. Bacteriol.">
        <title>Comparative genomics of Salmonella enterica serovar Typhi strains Ty2 and CT18.</title>
        <authorList>
            <person name="Deng W."/>
            <person name="Liou S.-R."/>
            <person name="Plunkett G. III"/>
            <person name="Mayhew G.F."/>
            <person name="Rose D.J."/>
            <person name="Burland V."/>
            <person name="Kodoyianni V."/>
            <person name="Schwartz D.C."/>
            <person name="Blattner F.R."/>
        </authorList>
    </citation>
    <scope>NUCLEOTIDE SEQUENCE [LARGE SCALE GENOMIC DNA]</scope>
    <source>
        <strain>ATCC 700931 / Ty2</strain>
    </source>
</reference>
<proteinExistence type="inferred from homology"/>
<name>YBHG_SALTI</name>
<dbReference type="EMBL" id="AL513382">
    <property type="protein sequence ID" value="CAD05265.1"/>
    <property type="molecule type" value="Genomic_DNA"/>
</dbReference>
<dbReference type="EMBL" id="AE014613">
    <property type="protein sequence ID" value="AAO69690.1"/>
    <property type="molecule type" value="Genomic_DNA"/>
</dbReference>
<dbReference type="RefSeq" id="NP_455356.1">
    <property type="nucleotide sequence ID" value="NC_003198.1"/>
</dbReference>
<dbReference type="SMR" id="Q8Z879"/>
<dbReference type="STRING" id="220341.gene:17584855"/>
<dbReference type="KEGG" id="stt:t2070"/>
<dbReference type="KEGG" id="sty:STY0853"/>
<dbReference type="PATRIC" id="fig|220341.7.peg.858"/>
<dbReference type="eggNOG" id="COG0845">
    <property type="taxonomic scope" value="Bacteria"/>
</dbReference>
<dbReference type="HOGENOM" id="CLU_018816_6_3_6"/>
<dbReference type="OMA" id="MYLTDID"/>
<dbReference type="OrthoDB" id="9813967at2"/>
<dbReference type="Proteomes" id="UP000000541">
    <property type="component" value="Chromosome"/>
</dbReference>
<dbReference type="Proteomes" id="UP000002670">
    <property type="component" value="Chromosome"/>
</dbReference>
<dbReference type="GO" id="GO:0042597">
    <property type="term" value="C:periplasmic space"/>
    <property type="evidence" value="ECO:0007669"/>
    <property type="project" value="UniProtKB-SubCell"/>
</dbReference>
<dbReference type="FunFam" id="1.10.287.470:FF:000004">
    <property type="entry name" value="UPF0194 membrane protein YbhG"/>
    <property type="match status" value="1"/>
</dbReference>
<dbReference type="FunFam" id="2.40.50.100:FF:000025">
    <property type="entry name" value="UPF0194 membrane protein YbhG"/>
    <property type="match status" value="1"/>
</dbReference>
<dbReference type="Gene3D" id="2.40.30.170">
    <property type="match status" value="1"/>
</dbReference>
<dbReference type="Gene3D" id="2.40.50.100">
    <property type="match status" value="2"/>
</dbReference>
<dbReference type="Gene3D" id="1.10.287.470">
    <property type="entry name" value="Helix hairpin bin"/>
    <property type="match status" value="1"/>
</dbReference>
<dbReference type="HAMAP" id="MF_01304">
    <property type="entry name" value="UPF0194"/>
    <property type="match status" value="1"/>
</dbReference>
<dbReference type="InterPro" id="IPR032317">
    <property type="entry name" value="CusB_D23"/>
</dbReference>
<dbReference type="InterPro" id="IPR022936">
    <property type="entry name" value="UPF0194_membrane_YbhG"/>
</dbReference>
<dbReference type="InterPro" id="IPR050465">
    <property type="entry name" value="UPF0194_transport"/>
</dbReference>
<dbReference type="NCBIfam" id="NF002939">
    <property type="entry name" value="PRK03598.1"/>
    <property type="match status" value="1"/>
</dbReference>
<dbReference type="PANTHER" id="PTHR32347">
    <property type="entry name" value="EFFLUX SYSTEM COMPONENT YKNX-RELATED"/>
    <property type="match status" value="1"/>
</dbReference>
<dbReference type="PANTHER" id="PTHR32347:SF29">
    <property type="entry name" value="UPF0194 MEMBRANE PROTEIN YBHG"/>
    <property type="match status" value="1"/>
</dbReference>
<dbReference type="Pfam" id="PF16576">
    <property type="entry name" value="HlyD_D23"/>
    <property type="match status" value="1"/>
</dbReference>
<dbReference type="SUPFAM" id="SSF111369">
    <property type="entry name" value="HlyD-like secretion proteins"/>
    <property type="match status" value="3"/>
</dbReference>
<gene>
    <name type="primary">ybhG</name>
    <name type="ordered locus">STY0853</name>
    <name type="ordered locus">t2070</name>
</gene>
<keyword id="KW-0175">Coiled coil</keyword>
<keyword id="KW-0574">Periplasm</keyword>
<keyword id="KW-0732">Signal</keyword>
<accession>Q8Z879</accession>
<evidence type="ECO:0000255" key="1"/>
<evidence type="ECO:0000305" key="2"/>